<proteinExistence type="inferred from homology"/>
<comment type="function">
    <text evidence="1">Catalyzes the reversible interconversion of serine and glycine with tetrahydrofolate (THF) serving as the one-carbon carrier. This reaction serves as the major source of one-carbon groups required for the biosynthesis of purines, thymidylate, methionine, and other important biomolecules. Also exhibits THF-independent aldolase activity toward beta-hydroxyamino acids, producing glycine and aldehydes, via a retro-aldol mechanism.</text>
</comment>
<comment type="catalytic activity">
    <reaction evidence="1">
        <text>(6R)-5,10-methylene-5,6,7,8-tetrahydrofolate + glycine + H2O = (6S)-5,6,7,8-tetrahydrofolate + L-serine</text>
        <dbReference type="Rhea" id="RHEA:15481"/>
        <dbReference type="ChEBI" id="CHEBI:15377"/>
        <dbReference type="ChEBI" id="CHEBI:15636"/>
        <dbReference type="ChEBI" id="CHEBI:33384"/>
        <dbReference type="ChEBI" id="CHEBI:57305"/>
        <dbReference type="ChEBI" id="CHEBI:57453"/>
        <dbReference type="EC" id="2.1.2.1"/>
    </reaction>
</comment>
<comment type="cofactor">
    <cofactor evidence="1">
        <name>pyridoxal 5'-phosphate</name>
        <dbReference type="ChEBI" id="CHEBI:597326"/>
    </cofactor>
</comment>
<comment type="pathway">
    <text evidence="1">One-carbon metabolism; tetrahydrofolate interconversion.</text>
</comment>
<comment type="pathway">
    <text evidence="1">Amino-acid biosynthesis; glycine biosynthesis; glycine from L-serine: step 1/1.</text>
</comment>
<comment type="subunit">
    <text evidence="1">Homodimer.</text>
</comment>
<comment type="subcellular location">
    <subcellularLocation>
        <location evidence="1">Cytoplasm</location>
    </subcellularLocation>
</comment>
<comment type="similarity">
    <text evidence="1">Belongs to the SHMT family.</text>
</comment>
<sequence length="574" mass="62689">MNNSALRAYLSTRAPDQIHSAFVAYLANLDLVAHQFPQIASDIVQELIDQRSYVKLIASENYSSLAVQAAMANLLTDKYAEGFPHHRYYGGCQNVDSIESAAAAEACALFGAEHAYVQPHSGADANLVAFWAILSRQIEMPTLSSLGVTAATHLSEEQWEVLRQKMGNQKLMGLDYFSGGHLTHGYRQNVSGRMFRVVSYAVDRDTGLLDYAAIEAQAKRERPLILLAGYSAYPRSINFRIFREIADKVGAVLMADMAHFAGLVAGGVFTGDEDPVRWSHIVTSTTHKTLRGPRGAFILCKKEFAEAVDKGCPLVLGGPLPHVMAAKAVAFREARNAAFKTYAHAVRDNARALADACIQQGMQLQTGGTDNHLLLLDVRPFGLTGRQAERALIDCGVTLNRNSLPFDPNGAWLTSGLRIGTPAVTSLGMGPEEMKRIARLIARVLGAATPVRTKTGALSKSAAEVPGEVRSSVCSEVRELLARFTLYPELDEPFLRAHFTRRPAGQNTCRRRDLNPYGVTPTDFESVVSASFTTSARAQPITRGTKGTAVHVVFLREAPCLPLREPLFFSHEEF</sequence>
<name>GLYA_TREPA</name>
<keyword id="KW-0028">Amino-acid biosynthesis</keyword>
<keyword id="KW-0963">Cytoplasm</keyword>
<keyword id="KW-0554">One-carbon metabolism</keyword>
<keyword id="KW-0663">Pyridoxal phosphate</keyword>
<keyword id="KW-1185">Reference proteome</keyword>
<keyword id="KW-0808">Transferase</keyword>
<accession>O83349</accession>
<reference key="1">
    <citation type="journal article" date="1998" name="Science">
        <title>Complete genome sequence of Treponema pallidum, the syphilis spirochete.</title>
        <authorList>
            <person name="Fraser C.M."/>
            <person name="Norris S.J."/>
            <person name="Weinstock G.M."/>
            <person name="White O."/>
            <person name="Sutton G.G."/>
            <person name="Dodson R.J."/>
            <person name="Gwinn M.L."/>
            <person name="Hickey E.K."/>
            <person name="Clayton R.A."/>
            <person name="Ketchum K.A."/>
            <person name="Sodergren E."/>
            <person name="Hardham J.M."/>
            <person name="McLeod M.P."/>
            <person name="Salzberg S.L."/>
            <person name="Peterson J.D."/>
            <person name="Khalak H.G."/>
            <person name="Richardson D.L."/>
            <person name="Howell J.K."/>
            <person name="Chidambaram M."/>
            <person name="Utterback T.R."/>
            <person name="McDonald L.A."/>
            <person name="Artiach P."/>
            <person name="Bowman C."/>
            <person name="Cotton M.D."/>
            <person name="Fujii C."/>
            <person name="Garland S.A."/>
            <person name="Hatch B."/>
            <person name="Horst K."/>
            <person name="Roberts K.M."/>
            <person name="Sandusky M."/>
            <person name="Weidman J.F."/>
            <person name="Smith H.O."/>
            <person name="Venter J.C."/>
        </authorList>
    </citation>
    <scope>NUCLEOTIDE SEQUENCE [LARGE SCALE GENOMIC DNA]</scope>
    <source>
        <strain>Nichols</strain>
    </source>
</reference>
<organism>
    <name type="scientific">Treponema pallidum (strain Nichols)</name>
    <dbReference type="NCBI Taxonomy" id="243276"/>
    <lineage>
        <taxon>Bacteria</taxon>
        <taxon>Pseudomonadati</taxon>
        <taxon>Spirochaetota</taxon>
        <taxon>Spirochaetia</taxon>
        <taxon>Spirochaetales</taxon>
        <taxon>Treponemataceae</taxon>
        <taxon>Treponema</taxon>
    </lineage>
</organism>
<gene>
    <name evidence="1" type="primary">glyA</name>
    <name type="ordered locus">TP_0329</name>
</gene>
<evidence type="ECO:0000255" key="1">
    <source>
        <dbReference type="HAMAP-Rule" id="MF_00051"/>
    </source>
</evidence>
<protein>
    <recommendedName>
        <fullName evidence="1">Serine hydroxymethyltransferase</fullName>
        <shortName evidence="1">SHMT</shortName>
        <shortName evidence="1">Serine methylase</shortName>
        <ecNumber evidence="1">2.1.2.1</ecNumber>
    </recommendedName>
</protein>
<feature type="chain" id="PRO_0000113687" description="Serine hydroxymethyltransferase">
    <location>
        <begin position="1"/>
        <end position="574"/>
    </location>
</feature>
<feature type="binding site" evidence="1">
    <location>
        <begin position="180"/>
        <end position="182"/>
    </location>
    <ligand>
        <name>(6S)-5,6,7,8-tetrahydrofolate</name>
        <dbReference type="ChEBI" id="CHEBI:57453"/>
    </ligand>
</feature>
<feature type="binding site" evidence="1">
    <location>
        <position position="306"/>
    </location>
    <ligand>
        <name>(6S)-5,6,7,8-tetrahydrofolate</name>
        <dbReference type="ChEBI" id="CHEBI:57453"/>
    </ligand>
</feature>
<feature type="site" description="Plays an important role in substrate specificity" evidence="1">
    <location>
        <position position="287"/>
    </location>
</feature>
<feature type="modified residue" description="N6-(pyridoxal phosphate)lysine" evidence="1">
    <location>
        <position position="288"/>
    </location>
</feature>
<dbReference type="EC" id="2.1.2.1" evidence="1"/>
<dbReference type="EMBL" id="AE000520">
    <property type="protein sequence ID" value="AAC65317.1"/>
    <property type="molecule type" value="Genomic_DNA"/>
</dbReference>
<dbReference type="PIR" id="G71336">
    <property type="entry name" value="G71336"/>
</dbReference>
<dbReference type="SMR" id="O83349"/>
<dbReference type="IntAct" id="O83349">
    <property type="interactions" value="2"/>
</dbReference>
<dbReference type="STRING" id="243276.TP_0329"/>
<dbReference type="EnsemblBacteria" id="AAC65317">
    <property type="protein sequence ID" value="AAC65317"/>
    <property type="gene ID" value="TP_0329"/>
</dbReference>
<dbReference type="KEGG" id="tpa:TP_0329"/>
<dbReference type="eggNOG" id="COG0112">
    <property type="taxonomic scope" value="Bacteria"/>
</dbReference>
<dbReference type="HOGENOM" id="CLU_022477_2_1_12"/>
<dbReference type="UniPathway" id="UPA00193"/>
<dbReference type="UniPathway" id="UPA00288">
    <property type="reaction ID" value="UER01023"/>
</dbReference>
<dbReference type="Proteomes" id="UP000000811">
    <property type="component" value="Chromosome"/>
</dbReference>
<dbReference type="GO" id="GO:0005829">
    <property type="term" value="C:cytosol"/>
    <property type="evidence" value="ECO:0007669"/>
    <property type="project" value="TreeGrafter"/>
</dbReference>
<dbReference type="GO" id="GO:0004372">
    <property type="term" value="F:glycine hydroxymethyltransferase activity"/>
    <property type="evidence" value="ECO:0007669"/>
    <property type="project" value="UniProtKB-UniRule"/>
</dbReference>
<dbReference type="GO" id="GO:0030170">
    <property type="term" value="F:pyridoxal phosphate binding"/>
    <property type="evidence" value="ECO:0007669"/>
    <property type="project" value="UniProtKB-UniRule"/>
</dbReference>
<dbReference type="GO" id="GO:0019264">
    <property type="term" value="P:glycine biosynthetic process from serine"/>
    <property type="evidence" value="ECO:0007669"/>
    <property type="project" value="UniProtKB-UniRule"/>
</dbReference>
<dbReference type="GO" id="GO:0035999">
    <property type="term" value="P:tetrahydrofolate interconversion"/>
    <property type="evidence" value="ECO:0007669"/>
    <property type="project" value="UniProtKB-UniRule"/>
</dbReference>
<dbReference type="CDD" id="cd00378">
    <property type="entry name" value="SHMT"/>
    <property type="match status" value="1"/>
</dbReference>
<dbReference type="FunFam" id="3.40.640.10:FF:000060">
    <property type="entry name" value="Serine hydroxymethyltransferase"/>
    <property type="match status" value="1"/>
</dbReference>
<dbReference type="Gene3D" id="3.90.1150.10">
    <property type="entry name" value="Aspartate Aminotransferase, domain 1"/>
    <property type="match status" value="1"/>
</dbReference>
<dbReference type="Gene3D" id="3.40.640.10">
    <property type="entry name" value="Type I PLP-dependent aspartate aminotransferase-like (Major domain)"/>
    <property type="match status" value="1"/>
</dbReference>
<dbReference type="HAMAP" id="MF_00051">
    <property type="entry name" value="SHMT"/>
    <property type="match status" value="1"/>
</dbReference>
<dbReference type="InterPro" id="IPR015424">
    <property type="entry name" value="PyrdxlP-dep_Trfase"/>
</dbReference>
<dbReference type="InterPro" id="IPR015421">
    <property type="entry name" value="PyrdxlP-dep_Trfase_major"/>
</dbReference>
<dbReference type="InterPro" id="IPR015422">
    <property type="entry name" value="PyrdxlP-dep_Trfase_small"/>
</dbReference>
<dbReference type="InterPro" id="IPR001085">
    <property type="entry name" value="Ser_HO-MeTrfase"/>
</dbReference>
<dbReference type="InterPro" id="IPR049943">
    <property type="entry name" value="Ser_HO-MeTrfase-like"/>
</dbReference>
<dbReference type="InterPro" id="IPR019798">
    <property type="entry name" value="Ser_HO-MeTrfase_PLP_BS"/>
</dbReference>
<dbReference type="InterPro" id="IPR039429">
    <property type="entry name" value="SHMT-like_dom"/>
</dbReference>
<dbReference type="NCBIfam" id="NF000586">
    <property type="entry name" value="PRK00011.1"/>
    <property type="match status" value="1"/>
</dbReference>
<dbReference type="NCBIfam" id="NF010094">
    <property type="entry name" value="PRK13580.1"/>
    <property type="match status" value="1"/>
</dbReference>
<dbReference type="PANTHER" id="PTHR11680">
    <property type="entry name" value="SERINE HYDROXYMETHYLTRANSFERASE"/>
    <property type="match status" value="1"/>
</dbReference>
<dbReference type="PANTHER" id="PTHR11680:SF35">
    <property type="entry name" value="SERINE HYDROXYMETHYLTRANSFERASE 1"/>
    <property type="match status" value="1"/>
</dbReference>
<dbReference type="Pfam" id="PF00464">
    <property type="entry name" value="SHMT"/>
    <property type="match status" value="2"/>
</dbReference>
<dbReference type="SUPFAM" id="SSF53383">
    <property type="entry name" value="PLP-dependent transferases"/>
    <property type="match status" value="1"/>
</dbReference>
<dbReference type="PROSITE" id="PS00096">
    <property type="entry name" value="SHMT"/>
    <property type="match status" value="1"/>
</dbReference>